<dbReference type="EMBL" id="AE016827">
    <property type="protein sequence ID" value="AAU38956.1"/>
    <property type="status" value="ALT_INIT"/>
    <property type="molecule type" value="Genomic_DNA"/>
</dbReference>
<dbReference type="RefSeq" id="WP_011201494.1">
    <property type="nucleotide sequence ID" value="NC_006300.1"/>
</dbReference>
<dbReference type="SMR" id="Q65Q04"/>
<dbReference type="STRING" id="221988.MS2349"/>
<dbReference type="KEGG" id="msu:MS2349"/>
<dbReference type="eggNOG" id="COG0712">
    <property type="taxonomic scope" value="Bacteria"/>
</dbReference>
<dbReference type="HOGENOM" id="CLU_085114_3_0_6"/>
<dbReference type="OrthoDB" id="9816221at2"/>
<dbReference type="Proteomes" id="UP000000607">
    <property type="component" value="Chromosome"/>
</dbReference>
<dbReference type="GO" id="GO:0005886">
    <property type="term" value="C:plasma membrane"/>
    <property type="evidence" value="ECO:0007669"/>
    <property type="project" value="UniProtKB-SubCell"/>
</dbReference>
<dbReference type="GO" id="GO:0045259">
    <property type="term" value="C:proton-transporting ATP synthase complex"/>
    <property type="evidence" value="ECO:0007669"/>
    <property type="project" value="UniProtKB-KW"/>
</dbReference>
<dbReference type="GO" id="GO:0046933">
    <property type="term" value="F:proton-transporting ATP synthase activity, rotational mechanism"/>
    <property type="evidence" value="ECO:0007669"/>
    <property type="project" value="UniProtKB-UniRule"/>
</dbReference>
<dbReference type="Gene3D" id="1.10.520.20">
    <property type="entry name" value="N-terminal domain of the delta subunit of the F1F0-ATP synthase"/>
    <property type="match status" value="1"/>
</dbReference>
<dbReference type="HAMAP" id="MF_01416">
    <property type="entry name" value="ATP_synth_delta_bact"/>
    <property type="match status" value="1"/>
</dbReference>
<dbReference type="InterPro" id="IPR026015">
    <property type="entry name" value="ATP_synth_OSCP/delta_N_sf"/>
</dbReference>
<dbReference type="InterPro" id="IPR000711">
    <property type="entry name" value="ATPase_OSCP/dsu"/>
</dbReference>
<dbReference type="NCBIfam" id="TIGR01145">
    <property type="entry name" value="ATP_synt_delta"/>
    <property type="match status" value="1"/>
</dbReference>
<dbReference type="NCBIfam" id="NF004402">
    <property type="entry name" value="PRK05758.2-2"/>
    <property type="match status" value="1"/>
</dbReference>
<dbReference type="NCBIfam" id="NF004404">
    <property type="entry name" value="PRK05758.2-5"/>
    <property type="match status" value="1"/>
</dbReference>
<dbReference type="PANTHER" id="PTHR11910">
    <property type="entry name" value="ATP SYNTHASE DELTA CHAIN"/>
    <property type="match status" value="1"/>
</dbReference>
<dbReference type="Pfam" id="PF00213">
    <property type="entry name" value="OSCP"/>
    <property type="match status" value="1"/>
</dbReference>
<dbReference type="PRINTS" id="PR00125">
    <property type="entry name" value="ATPASEDELTA"/>
</dbReference>
<dbReference type="SUPFAM" id="SSF47928">
    <property type="entry name" value="N-terminal domain of the delta subunit of the F1F0-ATP synthase"/>
    <property type="match status" value="1"/>
</dbReference>
<sequence length="181" mass="20108">MSELTTIARPYAKAAFDFAVEQSATDKSAVEKWTEMLGFAAQVADNEQIRDFFANTFSVQKAADAMVSICGEQLDQYGQNLIRLMAENKRLTVLPAVFDEFQRYVEEHNATAEVQVISAQPLNATQEQKIAAAMEKRLARKVKLNCSVDNSLLAGVIIRTDDFVIDGSSRGQLNRLANELQ</sequence>
<evidence type="ECO:0000255" key="1">
    <source>
        <dbReference type="HAMAP-Rule" id="MF_01416"/>
    </source>
</evidence>
<evidence type="ECO:0000305" key="2"/>
<organism>
    <name type="scientific">Mannheimia succiniciproducens (strain KCTC 0769BP / MBEL55E)</name>
    <dbReference type="NCBI Taxonomy" id="221988"/>
    <lineage>
        <taxon>Bacteria</taxon>
        <taxon>Pseudomonadati</taxon>
        <taxon>Pseudomonadota</taxon>
        <taxon>Gammaproteobacteria</taxon>
        <taxon>Pasteurellales</taxon>
        <taxon>Pasteurellaceae</taxon>
        <taxon>Basfia</taxon>
    </lineage>
</organism>
<gene>
    <name evidence="1" type="primary">atpH</name>
    <name type="ordered locus">MS2349</name>
</gene>
<proteinExistence type="inferred from homology"/>
<comment type="function">
    <text evidence="1">F(1)F(0) ATP synthase produces ATP from ADP in the presence of a proton or sodium gradient. F-type ATPases consist of two structural domains, F(1) containing the extramembraneous catalytic core and F(0) containing the membrane proton channel, linked together by a central stalk and a peripheral stalk. During catalysis, ATP synthesis in the catalytic domain of F(1) is coupled via a rotary mechanism of the central stalk subunits to proton translocation.</text>
</comment>
<comment type="function">
    <text evidence="1">This protein is part of the stalk that links CF(0) to CF(1). It either transmits conformational changes from CF(0) to CF(1) or is implicated in proton conduction.</text>
</comment>
<comment type="subunit">
    <text evidence="1">F-type ATPases have 2 components, F(1) - the catalytic core - and F(0) - the membrane proton channel. F(1) has five subunits: alpha(3), beta(3), gamma(1), delta(1), epsilon(1). F(0) has three main subunits: a(1), b(2) and c(10-14). The alpha and beta chains form an alternating ring which encloses part of the gamma chain. F(1) is attached to F(0) by a central stalk formed by the gamma and epsilon chains, while a peripheral stalk is formed by the delta and b chains.</text>
</comment>
<comment type="subcellular location">
    <subcellularLocation>
        <location evidence="1">Cell inner membrane</location>
        <topology evidence="1">Peripheral membrane protein</topology>
    </subcellularLocation>
</comment>
<comment type="similarity">
    <text evidence="1">Belongs to the ATPase delta chain family.</text>
</comment>
<comment type="sequence caution" evidence="2">
    <conflict type="erroneous initiation">
        <sequence resource="EMBL-CDS" id="AAU38956"/>
    </conflict>
</comment>
<reference key="1">
    <citation type="journal article" date="2004" name="Nat. Biotechnol.">
        <title>The genome sequence of the capnophilic rumen bacterium Mannheimia succiniciproducens.</title>
        <authorList>
            <person name="Hong S.H."/>
            <person name="Kim J.S."/>
            <person name="Lee S.Y."/>
            <person name="In Y.H."/>
            <person name="Choi S.S."/>
            <person name="Rih J.-K."/>
            <person name="Kim C.H."/>
            <person name="Jeong H."/>
            <person name="Hur C.G."/>
            <person name="Kim J.J."/>
        </authorList>
    </citation>
    <scope>NUCLEOTIDE SEQUENCE [LARGE SCALE GENOMIC DNA]</scope>
    <source>
        <strain>KCTC 0769BP / MBEL55E</strain>
    </source>
</reference>
<protein>
    <recommendedName>
        <fullName evidence="1">ATP synthase subunit delta</fullName>
    </recommendedName>
    <alternativeName>
        <fullName evidence="1">ATP synthase F(1) sector subunit delta</fullName>
    </alternativeName>
    <alternativeName>
        <fullName evidence="1">F-type ATPase subunit delta</fullName>
        <shortName evidence="1">F-ATPase subunit delta</shortName>
    </alternativeName>
</protein>
<accession>Q65Q04</accession>
<name>ATPD_MANSM</name>
<feature type="chain" id="PRO_0000382119" description="ATP synthase subunit delta">
    <location>
        <begin position="1"/>
        <end position="181"/>
    </location>
</feature>
<keyword id="KW-0066">ATP synthesis</keyword>
<keyword id="KW-0997">Cell inner membrane</keyword>
<keyword id="KW-1003">Cell membrane</keyword>
<keyword id="KW-0139">CF(1)</keyword>
<keyword id="KW-0375">Hydrogen ion transport</keyword>
<keyword id="KW-0406">Ion transport</keyword>
<keyword id="KW-0472">Membrane</keyword>
<keyword id="KW-0813">Transport</keyword>